<geneLocation type="chloroplast"/>
<feature type="chain" id="PRO_0000326025" description="Photosystem I assembly protein Ycf4">
    <location>
        <begin position="1"/>
        <end position="164"/>
    </location>
</feature>
<feature type="transmembrane region" description="Helical" evidence="2">
    <location>
        <begin position="14"/>
        <end position="34"/>
    </location>
</feature>
<feature type="transmembrane region" description="Helical" evidence="2">
    <location>
        <begin position="45"/>
        <end position="65"/>
    </location>
</feature>
<name>YCF4_CYAM1</name>
<dbReference type="EMBL" id="AB002583">
    <property type="protein sequence ID" value="BAC76294.1"/>
    <property type="molecule type" value="Genomic_DNA"/>
</dbReference>
<dbReference type="RefSeq" id="NP_849132.1">
    <property type="nucleotide sequence ID" value="NC_004799.1"/>
</dbReference>
<dbReference type="STRING" id="280699.Q85FQ1"/>
<dbReference type="EnsemblPlants" id="CMV233CT">
    <property type="protein sequence ID" value="CMV233CT"/>
    <property type="gene ID" value="CMV233C"/>
</dbReference>
<dbReference type="GeneID" id="845079"/>
<dbReference type="Gramene" id="CMV233CT">
    <property type="protein sequence ID" value="CMV233CT"/>
    <property type="gene ID" value="CMV233C"/>
</dbReference>
<dbReference type="KEGG" id="cme:CymeCp200"/>
<dbReference type="eggNOG" id="ENOG502QWGG">
    <property type="taxonomic scope" value="Eukaryota"/>
</dbReference>
<dbReference type="HOGENOM" id="CLU_095465_0_0_1"/>
<dbReference type="Proteomes" id="UP000007014">
    <property type="component" value="Chloroplast"/>
</dbReference>
<dbReference type="GO" id="GO:0009535">
    <property type="term" value="C:chloroplast thylakoid membrane"/>
    <property type="evidence" value="ECO:0007669"/>
    <property type="project" value="UniProtKB-SubCell"/>
</dbReference>
<dbReference type="GO" id="GO:0009522">
    <property type="term" value="C:photosystem I"/>
    <property type="evidence" value="ECO:0007669"/>
    <property type="project" value="InterPro"/>
</dbReference>
<dbReference type="GO" id="GO:0015979">
    <property type="term" value="P:photosynthesis"/>
    <property type="evidence" value="ECO:0007669"/>
    <property type="project" value="UniProtKB-KW"/>
</dbReference>
<dbReference type="InterPro" id="IPR003359">
    <property type="entry name" value="PSI_Ycf4_assembly"/>
</dbReference>
<dbReference type="Pfam" id="PF02392">
    <property type="entry name" value="Ycf4"/>
    <property type="match status" value="1"/>
</dbReference>
<protein>
    <recommendedName>
        <fullName>Photosystem I assembly protein Ycf4</fullName>
    </recommendedName>
</protein>
<keyword id="KW-0150">Chloroplast</keyword>
<keyword id="KW-0472">Membrane</keyword>
<keyword id="KW-0602">Photosynthesis</keyword>
<keyword id="KW-0934">Plastid</keyword>
<keyword id="KW-1185">Reference proteome</keyword>
<keyword id="KW-0793">Thylakoid</keyword>
<keyword id="KW-0812">Transmembrane</keyword>
<keyword id="KW-1133">Transmembrane helix</keyword>
<accession>Q85FQ1</accession>
<evidence type="ECO:0000250" key="1"/>
<evidence type="ECO:0000255" key="2"/>
<evidence type="ECO:0000305" key="3"/>
<organism>
    <name type="scientific">Cyanidioschyzon merolae (strain NIES-3377 / 10D)</name>
    <name type="common">Unicellular red alga</name>
    <dbReference type="NCBI Taxonomy" id="280699"/>
    <lineage>
        <taxon>Eukaryota</taxon>
        <taxon>Rhodophyta</taxon>
        <taxon>Bangiophyceae</taxon>
        <taxon>Cyanidiales</taxon>
        <taxon>Cyanidiaceae</taxon>
        <taxon>Cyanidioschyzon</taxon>
    </lineage>
</organism>
<proteinExistence type="inferred from homology"/>
<comment type="function">
    <text evidence="1">Seems to be required for the assembly of the photosystem I complex.</text>
</comment>
<comment type="subcellular location">
    <subcellularLocation>
        <location evidence="1">Plastid</location>
        <location evidence="1">Chloroplast thylakoid membrane</location>
        <topology evidence="1">Multi-pass membrane protein</topology>
    </subcellularLocation>
</comment>
<comment type="similarity">
    <text evidence="3">Belongs to the Ycf4 family.</text>
</comment>
<sequence length="164" mass="18457">MSIQRESIIGSRRWSNMIWCAILVTAGSGFWFNGMQSELALQGAIMCFYGSVAVTLSVYLFLTIWWDVGGGYNEYDTENKSITIWRRGFGNKTIFLKYTRDQMQALKVVVKDGLNPKREIYLCTTTGAQIPLTAVGEPMPLAELEQKATQLAQWLNLSLVGMRA</sequence>
<gene>
    <name type="primary">ycf4</name>
</gene>
<reference key="1">
    <citation type="journal article" date="2003" name="DNA Res.">
        <title>Complete sequence and analysis of the plastid genome of the unicellular red alga Cyanidioschyzon merolae.</title>
        <authorList>
            <person name="Ohta N."/>
            <person name="Matsuzaki M."/>
            <person name="Misumi O."/>
            <person name="Miyagishima S.-Y."/>
            <person name="Nozaki H."/>
            <person name="Tanaka K."/>
            <person name="Shin-i T."/>
            <person name="Kohara Y."/>
            <person name="Kuroiwa T."/>
        </authorList>
    </citation>
    <scope>NUCLEOTIDE SEQUENCE [LARGE SCALE GENOMIC DNA]</scope>
    <source>
        <strain>NIES-3377 / 10D</strain>
    </source>
</reference>